<keyword id="KW-0687">Ribonucleoprotein</keyword>
<keyword id="KW-0689">Ribosomal protein</keyword>
<name>RS2_DEHM1</name>
<gene>
    <name evidence="1" type="primary">rpsB</name>
    <name type="ordered locus">DET0377</name>
</gene>
<reference key="1">
    <citation type="journal article" date="2005" name="Science">
        <title>Genome sequence of the PCE-dechlorinating bacterium Dehalococcoides ethenogenes.</title>
        <authorList>
            <person name="Seshadri R."/>
            <person name="Adrian L."/>
            <person name="Fouts D.E."/>
            <person name="Eisen J.A."/>
            <person name="Phillippy A.M."/>
            <person name="Methe B.A."/>
            <person name="Ward N.L."/>
            <person name="Nelson W.C."/>
            <person name="DeBoy R.T."/>
            <person name="Khouri H.M."/>
            <person name="Kolonay J.F."/>
            <person name="Dodson R.J."/>
            <person name="Daugherty S.C."/>
            <person name="Brinkac L.M."/>
            <person name="Sullivan S.A."/>
            <person name="Madupu R."/>
            <person name="Nelson K.E."/>
            <person name="Kang K.H."/>
            <person name="Impraim M."/>
            <person name="Tran K."/>
            <person name="Robinson J.M."/>
            <person name="Forberger H.A."/>
            <person name="Fraser C.M."/>
            <person name="Zinder S.H."/>
            <person name="Heidelberg J.F."/>
        </authorList>
    </citation>
    <scope>NUCLEOTIDE SEQUENCE [LARGE SCALE GENOMIC DNA]</scope>
    <source>
        <strain>ATCC BAA-2266 / KCTC 15142 / 195</strain>
    </source>
</reference>
<feature type="chain" id="PRO_1000003946" description="Small ribosomal subunit protein uS2">
    <location>
        <begin position="1"/>
        <end position="245"/>
    </location>
</feature>
<dbReference type="EMBL" id="CP000027">
    <property type="protein sequence ID" value="AAW40337.1"/>
    <property type="molecule type" value="Genomic_DNA"/>
</dbReference>
<dbReference type="RefSeq" id="WP_010936156.1">
    <property type="nucleotide sequence ID" value="NC_002936.3"/>
</dbReference>
<dbReference type="SMR" id="Q3Z9H6"/>
<dbReference type="FunCoup" id="Q3Z9H6">
    <property type="interactions" value="363"/>
</dbReference>
<dbReference type="STRING" id="243164.DET0377"/>
<dbReference type="GeneID" id="3230301"/>
<dbReference type="KEGG" id="det:DET0377"/>
<dbReference type="eggNOG" id="COG0052">
    <property type="taxonomic scope" value="Bacteria"/>
</dbReference>
<dbReference type="HOGENOM" id="CLU_040318_1_2_0"/>
<dbReference type="InParanoid" id="Q3Z9H6"/>
<dbReference type="Proteomes" id="UP000008289">
    <property type="component" value="Chromosome"/>
</dbReference>
<dbReference type="GO" id="GO:0022627">
    <property type="term" value="C:cytosolic small ribosomal subunit"/>
    <property type="evidence" value="ECO:0007669"/>
    <property type="project" value="TreeGrafter"/>
</dbReference>
<dbReference type="GO" id="GO:0003735">
    <property type="term" value="F:structural constituent of ribosome"/>
    <property type="evidence" value="ECO:0007669"/>
    <property type="project" value="InterPro"/>
</dbReference>
<dbReference type="GO" id="GO:0006412">
    <property type="term" value="P:translation"/>
    <property type="evidence" value="ECO:0007669"/>
    <property type="project" value="UniProtKB-UniRule"/>
</dbReference>
<dbReference type="CDD" id="cd01425">
    <property type="entry name" value="RPS2"/>
    <property type="match status" value="1"/>
</dbReference>
<dbReference type="Gene3D" id="3.40.50.10490">
    <property type="entry name" value="Glucose-6-phosphate isomerase like protein, domain 1"/>
    <property type="match status" value="1"/>
</dbReference>
<dbReference type="Gene3D" id="1.10.287.610">
    <property type="entry name" value="Helix hairpin bin"/>
    <property type="match status" value="1"/>
</dbReference>
<dbReference type="HAMAP" id="MF_00291_B">
    <property type="entry name" value="Ribosomal_uS2_B"/>
    <property type="match status" value="1"/>
</dbReference>
<dbReference type="InterPro" id="IPR001865">
    <property type="entry name" value="Ribosomal_uS2"/>
</dbReference>
<dbReference type="InterPro" id="IPR005706">
    <property type="entry name" value="Ribosomal_uS2_bac/mit/plastid"/>
</dbReference>
<dbReference type="InterPro" id="IPR018130">
    <property type="entry name" value="Ribosomal_uS2_CS"/>
</dbReference>
<dbReference type="InterPro" id="IPR023591">
    <property type="entry name" value="Ribosomal_uS2_flav_dom_sf"/>
</dbReference>
<dbReference type="NCBIfam" id="TIGR01011">
    <property type="entry name" value="rpsB_bact"/>
    <property type="match status" value="1"/>
</dbReference>
<dbReference type="PANTHER" id="PTHR12534">
    <property type="entry name" value="30S RIBOSOMAL PROTEIN S2 PROKARYOTIC AND ORGANELLAR"/>
    <property type="match status" value="1"/>
</dbReference>
<dbReference type="PANTHER" id="PTHR12534:SF0">
    <property type="entry name" value="SMALL RIBOSOMAL SUBUNIT PROTEIN US2M"/>
    <property type="match status" value="1"/>
</dbReference>
<dbReference type="Pfam" id="PF00318">
    <property type="entry name" value="Ribosomal_S2"/>
    <property type="match status" value="1"/>
</dbReference>
<dbReference type="PRINTS" id="PR00395">
    <property type="entry name" value="RIBOSOMALS2"/>
</dbReference>
<dbReference type="SUPFAM" id="SSF52313">
    <property type="entry name" value="Ribosomal protein S2"/>
    <property type="match status" value="1"/>
</dbReference>
<dbReference type="PROSITE" id="PS00962">
    <property type="entry name" value="RIBOSOMAL_S2_1"/>
    <property type="match status" value="1"/>
</dbReference>
<dbReference type="PROSITE" id="PS00963">
    <property type="entry name" value="RIBOSOMAL_S2_2"/>
    <property type="match status" value="1"/>
</dbReference>
<protein>
    <recommendedName>
        <fullName evidence="1">Small ribosomal subunit protein uS2</fullName>
    </recommendedName>
    <alternativeName>
        <fullName evidence="2">30S ribosomal protein S2</fullName>
    </alternativeName>
</protein>
<evidence type="ECO:0000255" key="1">
    <source>
        <dbReference type="HAMAP-Rule" id="MF_00291"/>
    </source>
</evidence>
<evidence type="ECO:0000305" key="2"/>
<accession>Q3Z9H6</accession>
<comment type="similarity">
    <text evidence="1">Belongs to the universal ribosomal protein uS2 family.</text>
</comment>
<sequence length="245" mass="27586">MPTTNIKELLEAGAHFGHQTSRWHPRMKKYIFTKRNGIHIIDLEKTVVMLDKACNYINQVVSEGGKVLFVGTKKQAQEILAEEAKRCGMYFINQRWTGGILTNFHSIQSRIDYLVRLEDQQARGDFNRLPKKEAQKLAEEIARLNRTMGGFKEMTRLPDVIFVVDPTKEKIAMAEAKRMGVPLVAMVDTNCNPDEVDYPIPSNDDAMRAIKLICSKMADSVIEAQNALKVTEVETTGEAQAETAG</sequence>
<organism>
    <name type="scientific">Dehalococcoides mccartyi (strain ATCC BAA-2266 / KCTC 15142 / 195)</name>
    <name type="common">Dehalococcoides ethenogenes (strain 195)</name>
    <dbReference type="NCBI Taxonomy" id="243164"/>
    <lineage>
        <taxon>Bacteria</taxon>
        <taxon>Bacillati</taxon>
        <taxon>Chloroflexota</taxon>
        <taxon>Dehalococcoidia</taxon>
        <taxon>Dehalococcoidales</taxon>
        <taxon>Dehalococcoidaceae</taxon>
        <taxon>Dehalococcoides</taxon>
    </lineage>
</organism>
<proteinExistence type="inferred from homology"/>